<protein>
    <recommendedName>
        <fullName evidence="1">Sulfate transporter CysZ</fullName>
    </recommendedName>
</protein>
<name>CYSZ_ECO8A</name>
<evidence type="ECO:0000255" key="1">
    <source>
        <dbReference type="HAMAP-Rule" id="MF_00468"/>
    </source>
</evidence>
<reference key="1">
    <citation type="journal article" date="2009" name="PLoS Genet.">
        <title>Organised genome dynamics in the Escherichia coli species results in highly diverse adaptive paths.</title>
        <authorList>
            <person name="Touchon M."/>
            <person name="Hoede C."/>
            <person name="Tenaillon O."/>
            <person name="Barbe V."/>
            <person name="Baeriswyl S."/>
            <person name="Bidet P."/>
            <person name="Bingen E."/>
            <person name="Bonacorsi S."/>
            <person name="Bouchier C."/>
            <person name="Bouvet O."/>
            <person name="Calteau A."/>
            <person name="Chiapello H."/>
            <person name="Clermont O."/>
            <person name="Cruveiller S."/>
            <person name="Danchin A."/>
            <person name="Diard M."/>
            <person name="Dossat C."/>
            <person name="Karoui M.E."/>
            <person name="Frapy E."/>
            <person name="Garry L."/>
            <person name="Ghigo J.M."/>
            <person name="Gilles A.M."/>
            <person name="Johnson J."/>
            <person name="Le Bouguenec C."/>
            <person name="Lescat M."/>
            <person name="Mangenot S."/>
            <person name="Martinez-Jehanne V."/>
            <person name="Matic I."/>
            <person name="Nassif X."/>
            <person name="Oztas S."/>
            <person name="Petit M.A."/>
            <person name="Pichon C."/>
            <person name="Rouy Z."/>
            <person name="Ruf C.S."/>
            <person name="Schneider D."/>
            <person name="Tourret J."/>
            <person name="Vacherie B."/>
            <person name="Vallenet D."/>
            <person name="Medigue C."/>
            <person name="Rocha E.P.C."/>
            <person name="Denamur E."/>
        </authorList>
    </citation>
    <scope>NUCLEOTIDE SEQUENCE [LARGE SCALE GENOMIC DNA]</scope>
    <source>
        <strain>IAI1</strain>
    </source>
</reference>
<dbReference type="EMBL" id="CU928160">
    <property type="protein sequence ID" value="CAQ99311.1"/>
    <property type="molecule type" value="Genomic_DNA"/>
</dbReference>
<dbReference type="RefSeq" id="WP_000254845.1">
    <property type="nucleotide sequence ID" value="NC_011741.1"/>
</dbReference>
<dbReference type="SMR" id="B7M6S3"/>
<dbReference type="KEGG" id="ecr:ECIAI1_2471"/>
<dbReference type="HOGENOM" id="CLU_070331_1_0_6"/>
<dbReference type="GO" id="GO:0005886">
    <property type="term" value="C:plasma membrane"/>
    <property type="evidence" value="ECO:0007669"/>
    <property type="project" value="UniProtKB-SubCell"/>
</dbReference>
<dbReference type="GO" id="GO:0009675">
    <property type="term" value="F:high-affinity sulfate:proton symporter activity"/>
    <property type="evidence" value="ECO:0007669"/>
    <property type="project" value="TreeGrafter"/>
</dbReference>
<dbReference type="GO" id="GO:0019344">
    <property type="term" value="P:cysteine biosynthetic process"/>
    <property type="evidence" value="ECO:0007669"/>
    <property type="project" value="UniProtKB-UniRule"/>
</dbReference>
<dbReference type="GO" id="GO:0000103">
    <property type="term" value="P:sulfate assimilation"/>
    <property type="evidence" value="ECO:0007669"/>
    <property type="project" value="InterPro"/>
</dbReference>
<dbReference type="HAMAP" id="MF_00468">
    <property type="entry name" value="CysZ"/>
    <property type="match status" value="1"/>
</dbReference>
<dbReference type="InterPro" id="IPR050480">
    <property type="entry name" value="CysZ_sulfate_transptr"/>
</dbReference>
<dbReference type="InterPro" id="IPR022985">
    <property type="entry name" value="Sulfate_CysZ"/>
</dbReference>
<dbReference type="NCBIfam" id="NF003433">
    <property type="entry name" value="PRK04949.1"/>
    <property type="match status" value="1"/>
</dbReference>
<dbReference type="PANTHER" id="PTHR37468">
    <property type="entry name" value="SULFATE TRANSPORTER CYSZ"/>
    <property type="match status" value="1"/>
</dbReference>
<dbReference type="PANTHER" id="PTHR37468:SF1">
    <property type="entry name" value="SULFATE TRANSPORTER CYSZ"/>
    <property type="match status" value="1"/>
</dbReference>
<dbReference type="Pfam" id="PF07264">
    <property type="entry name" value="EI24"/>
    <property type="match status" value="1"/>
</dbReference>
<sequence length="253" mass="29301">MVSSFTSAPRSGFYYFAQGWKLVSQPGIRRFVILPLLVNILLMGGAFWWLFTQLDVWIPTLMSYVPDWLQWLSYLLWPLAVISVLLVFGYFFSTIANWIAAPFNGLLAEQLEARLTGATPPDTGIFGIMKDVPRIMKREWQKFAWYLPRAIVLLILYLIPGIGQTVTPVLWFLFSAWMLAIQYCDYPFDNHKVPFKEMRTALRTRKITNMQFGALTSLFTMIPLLNLFIMPVAVCGATAMWVDCYRDKHAMWR</sequence>
<proteinExistence type="inferred from homology"/>
<organism>
    <name type="scientific">Escherichia coli O8 (strain IAI1)</name>
    <dbReference type="NCBI Taxonomy" id="585034"/>
    <lineage>
        <taxon>Bacteria</taxon>
        <taxon>Pseudomonadati</taxon>
        <taxon>Pseudomonadota</taxon>
        <taxon>Gammaproteobacteria</taxon>
        <taxon>Enterobacterales</taxon>
        <taxon>Enterobacteriaceae</taxon>
        <taxon>Escherichia</taxon>
    </lineage>
</organism>
<gene>
    <name evidence="1" type="primary">cysZ</name>
    <name type="ordered locus">ECIAI1_2471</name>
</gene>
<keyword id="KW-0028">Amino-acid biosynthesis</keyword>
<keyword id="KW-0997">Cell inner membrane</keyword>
<keyword id="KW-1003">Cell membrane</keyword>
<keyword id="KW-0198">Cysteine biosynthesis</keyword>
<keyword id="KW-0472">Membrane</keyword>
<keyword id="KW-0764">Sulfate transport</keyword>
<keyword id="KW-0812">Transmembrane</keyword>
<keyword id="KW-1133">Transmembrane helix</keyword>
<keyword id="KW-0813">Transport</keyword>
<accession>B7M6S3</accession>
<comment type="function">
    <text evidence="1">High affinity, high specificity proton-dependent sulfate transporter, which mediates sulfate uptake. Provides the sulfur source for the cysteine synthesis pathway.</text>
</comment>
<comment type="subcellular location">
    <subcellularLocation>
        <location evidence="1">Cell inner membrane</location>
        <topology evidence="1">Multi-pass membrane protein</topology>
    </subcellularLocation>
</comment>
<comment type="similarity">
    <text evidence="1">Belongs to the CysZ family.</text>
</comment>
<feature type="chain" id="PRO_1000125495" description="Sulfate transporter CysZ">
    <location>
        <begin position="1"/>
        <end position="253"/>
    </location>
</feature>
<feature type="transmembrane region" description="Helical" evidence="1">
    <location>
        <begin position="31"/>
        <end position="51"/>
    </location>
</feature>
<feature type="transmembrane region" description="Helical" evidence="1">
    <location>
        <begin position="75"/>
        <end position="95"/>
    </location>
</feature>
<feature type="transmembrane region" description="Helical" evidence="1">
    <location>
        <begin position="151"/>
        <end position="171"/>
    </location>
</feature>
<feature type="transmembrane region" description="Helical" evidence="1">
    <location>
        <begin position="222"/>
        <end position="242"/>
    </location>
</feature>